<protein>
    <recommendedName>
        <fullName>Mamu class II histocompatibility antigen, DR alpha chain</fullName>
    </recommendedName>
    <alternativeName>
        <fullName>MHC class II antigen DRA</fullName>
    </alternativeName>
</protein>
<proteinExistence type="evidence at transcript level"/>
<sequence length="254" mass="28405">MAESGVPVLGFFIIAVLMSAQESWAIKEEHVIIQAEFYLNPDQSGEFMFDFDGDEIFHVDMAKKETVWRLEEFGRFASFEAQGALANIAVDKANLEIMTKRSNNTPITNVPPEVTVLTNSPVELGEPNVLICFIDKFSPPVVKVTWLKNGKPVTTGVSETVFLPREDHLFRKFHYLPFLPSTEDIYDCKVEHWCLDAPLLKHWEFDAPSPLPETTENVVCALGLIVGLVGIIVGTVFIIKGVRKSNAAERRGPL</sequence>
<name>DRA_MACMU</name>
<dbReference type="EMBL" id="L27739">
    <property type="protein sequence ID" value="AAB63305.1"/>
    <property type="molecule type" value="mRNA"/>
</dbReference>
<dbReference type="SMR" id="Q30631"/>
<dbReference type="FunCoup" id="Q30631">
    <property type="interactions" value="517"/>
</dbReference>
<dbReference type="STRING" id="9544.ENSMMUP00000051222"/>
<dbReference type="GlyCosmos" id="Q30631">
    <property type="glycosylation" value="1 site, No reported glycans"/>
</dbReference>
<dbReference type="PaxDb" id="9544-ENSMMUP00000025306"/>
<dbReference type="eggNOG" id="ENOG502RXYJ">
    <property type="taxonomic scope" value="Eukaryota"/>
</dbReference>
<dbReference type="InParanoid" id="Q30631"/>
<dbReference type="Proteomes" id="UP000006718">
    <property type="component" value="Unassembled WGS sequence"/>
</dbReference>
<dbReference type="GO" id="GO:0031902">
    <property type="term" value="C:late endosome membrane"/>
    <property type="evidence" value="ECO:0000318"/>
    <property type="project" value="GO_Central"/>
</dbReference>
<dbReference type="GO" id="GO:0005765">
    <property type="term" value="C:lysosomal membrane"/>
    <property type="evidence" value="ECO:0000318"/>
    <property type="project" value="GO_Central"/>
</dbReference>
<dbReference type="GO" id="GO:0042613">
    <property type="term" value="C:MHC class II protein complex"/>
    <property type="evidence" value="ECO:0000318"/>
    <property type="project" value="GO_Central"/>
</dbReference>
<dbReference type="GO" id="GO:0023026">
    <property type="term" value="F:MHC class II protein complex binding"/>
    <property type="evidence" value="ECO:0000318"/>
    <property type="project" value="GO_Central"/>
</dbReference>
<dbReference type="GO" id="GO:0042605">
    <property type="term" value="F:peptide antigen binding"/>
    <property type="evidence" value="ECO:0000318"/>
    <property type="project" value="GO_Central"/>
</dbReference>
<dbReference type="GO" id="GO:0002250">
    <property type="term" value="P:adaptive immune response"/>
    <property type="evidence" value="ECO:0007669"/>
    <property type="project" value="UniProtKB-KW"/>
</dbReference>
<dbReference type="GO" id="GO:0019886">
    <property type="term" value="P:antigen processing and presentation of exogenous peptide antigen via MHC class II"/>
    <property type="evidence" value="ECO:0000318"/>
    <property type="project" value="GO_Central"/>
</dbReference>
<dbReference type="GO" id="GO:0002503">
    <property type="term" value="P:peptide antigen assembly with MHC class II protein complex"/>
    <property type="evidence" value="ECO:0000318"/>
    <property type="project" value="GO_Central"/>
</dbReference>
<dbReference type="GO" id="GO:0050778">
    <property type="term" value="P:positive regulation of immune response"/>
    <property type="evidence" value="ECO:0000318"/>
    <property type="project" value="GO_Central"/>
</dbReference>
<dbReference type="GO" id="GO:0050870">
    <property type="term" value="P:positive regulation of T cell activation"/>
    <property type="evidence" value="ECO:0000318"/>
    <property type="project" value="GO_Central"/>
</dbReference>
<dbReference type="FunFam" id="2.60.40.10:FF:000280">
    <property type="entry name" value="HLA class II histocompatibility antigen, DR alpha chain"/>
    <property type="match status" value="1"/>
</dbReference>
<dbReference type="FunFam" id="3.10.320.10:FF:000002">
    <property type="entry name" value="HLA class II histocompatibility antigen, DR alpha chain"/>
    <property type="match status" value="1"/>
</dbReference>
<dbReference type="Gene3D" id="3.10.320.10">
    <property type="entry name" value="Class II Histocompatibility Antigen, M Beta Chain, Chain B, domain 1"/>
    <property type="match status" value="1"/>
</dbReference>
<dbReference type="Gene3D" id="2.60.40.10">
    <property type="entry name" value="Immunoglobulins"/>
    <property type="match status" value="1"/>
</dbReference>
<dbReference type="InterPro" id="IPR007110">
    <property type="entry name" value="Ig-like_dom"/>
</dbReference>
<dbReference type="InterPro" id="IPR036179">
    <property type="entry name" value="Ig-like_dom_sf"/>
</dbReference>
<dbReference type="InterPro" id="IPR013783">
    <property type="entry name" value="Ig-like_fold"/>
</dbReference>
<dbReference type="InterPro" id="IPR003006">
    <property type="entry name" value="Ig/MHC_CS"/>
</dbReference>
<dbReference type="InterPro" id="IPR003597">
    <property type="entry name" value="Ig_C1-set"/>
</dbReference>
<dbReference type="InterPro" id="IPR050160">
    <property type="entry name" value="MHC/Immunoglobulin"/>
</dbReference>
<dbReference type="InterPro" id="IPR011162">
    <property type="entry name" value="MHC_I/II-like_Ag-recog"/>
</dbReference>
<dbReference type="InterPro" id="IPR014745">
    <property type="entry name" value="MHC_II_a/b_N"/>
</dbReference>
<dbReference type="InterPro" id="IPR001003">
    <property type="entry name" value="MHC_II_a_N"/>
</dbReference>
<dbReference type="PANTHER" id="PTHR19944:SF86">
    <property type="entry name" value="HLA CLASS II HISTOCOMPATIBILITY ANTIGEN, DR ALPHA CHAIN"/>
    <property type="match status" value="1"/>
</dbReference>
<dbReference type="PANTHER" id="PTHR19944">
    <property type="entry name" value="MHC CLASS II-RELATED"/>
    <property type="match status" value="1"/>
</dbReference>
<dbReference type="Pfam" id="PF07654">
    <property type="entry name" value="C1-set"/>
    <property type="match status" value="1"/>
</dbReference>
<dbReference type="Pfam" id="PF00993">
    <property type="entry name" value="MHC_II_alpha"/>
    <property type="match status" value="1"/>
</dbReference>
<dbReference type="SMART" id="SM00407">
    <property type="entry name" value="IGc1"/>
    <property type="match status" value="1"/>
</dbReference>
<dbReference type="SMART" id="SM00920">
    <property type="entry name" value="MHC_II_alpha"/>
    <property type="match status" value="1"/>
</dbReference>
<dbReference type="SUPFAM" id="SSF48726">
    <property type="entry name" value="Immunoglobulin"/>
    <property type="match status" value="1"/>
</dbReference>
<dbReference type="SUPFAM" id="SSF54452">
    <property type="entry name" value="MHC antigen-recognition domain"/>
    <property type="match status" value="1"/>
</dbReference>
<dbReference type="PROSITE" id="PS50835">
    <property type="entry name" value="IG_LIKE"/>
    <property type="match status" value="1"/>
</dbReference>
<dbReference type="PROSITE" id="PS00290">
    <property type="entry name" value="IG_MHC"/>
    <property type="match status" value="1"/>
</dbReference>
<comment type="subunit">
    <text>Heterodimer of an alpha chain and a beta chain.</text>
</comment>
<comment type="subcellular location">
    <subcellularLocation>
        <location>Membrane</location>
        <topology>Single-pass type I membrane protein</topology>
    </subcellularLocation>
</comment>
<comment type="similarity">
    <text evidence="5">Belongs to the MHC class II family.</text>
</comment>
<evidence type="ECO:0000250" key="1"/>
<evidence type="ECO:0000250" key="2">
    <source>
        <dbReference type="UniProtKB" id="P01903"/>
    </source>
</evidence>
<evidence type="ECO:0000255" key="3"/>
<evidence type="ECO:0000255" key="4">
    <source>
        <dbReference type="PROSITE-ProRule" id="PRU00114"/>
    </source>
</evidence>
<evidence type="ECO:0000305" key="5"/>
<gene>
    <name type="primary">Mamu-DRA</name>
</gene>
<accession>Q30631</accession>
<feature type="signal peptide" evidence="1">
    <location>
        <begin position="1"/>
        <end position="25"/>
    </location>
</feature>
<feature type="chain" id="PRO_0000018948" description="Mamu class II histocompatibility antigen, DR alpha chain">
    <location>
        <begin position="26"/>
        <end position="254"/>
    </location>
</feature>
<feature type="topological domain" description="Extracellular" evidence="3">
    <location>
        <begin position="26"/>
        <end position="216"/>
    </location>
</feature>
<feature type="transmembrane region" description="Helical" evidence="3">
    <location>
        <begin position="217"/>
        <end position="239"/>
    </location>
</feature>
<feature type="topological domain" description="Cytoplasmic" evidence="3">
    <location>
        <begin position="240"/>
        <end position="254"/>
    </location>
</feature>
<feature type="domain" description="Ig-like C1-type">
    <location>
        <begin position="112"/>
        <end position="204"/>
    </location>
</feature>
<feature type="region of interest" description="Alpha-1">
    <location>
        <begin position="26"/>
        <end position="109"/>
    </location>
</feature>
<feature type="region of interest" description="Alpha-2">
    <location>
        <begin position="110"/>
        <end position="203"/>
    </location>
</feature>
<feature type="region of interest" description="Connecting peptide">
    <location>
        <begin position="204"/>
        <end position="216"/>
    </location>
</feature>
<feature type="glycosylation site" description="N-linked (GlcNAc...) asparagine" evidence="3">
    <location>
        <position position="103"/>
    </location>
</feature>
<feature type="disulfide bond" evidence="4">
    <location>
        <begin position="132"/>
        <end position="188"/>
    </location>
</feature>
<feature type="cross-link" description="Glycyl lysine isopeptide (Lys-Gly) (interchain with G-Cter in ubiquitin)" evidence="2">
    <location>
        <position position="244"/>
    </location>
</feature>
<reference key="1">
    <citation type="journal article" date="1995" name="Hum. Immunol.">
        <title>Biochemical and molecular characterization of rhesus monkey major histocompatibility complex class II DR.</title>
        <authorList>
            <person name="Lekutis C."/>
            <person name="Letvin N.L."/>
        </authorList>
    </citation>
    <scope>NUCLEOTIDE SEQUENCE [MRNA]</scope>
</reference>
<keyword id="KW-1064">Adaptive immunity</keyword>
<keyword id="KW-1015">Disulfide bond</keyword>
<keyword id="KW-0325">Glycoprotein</keyword>
<keyword id="KW-0391">Immunity</keyword>
<keyword id="KW-1017">Isopeptide bond</keyword>
<keyword id="KW-0472">Membrane</keyword>
<keyword id="KW-0491">MHC II</keyword>
<keyword id="KW-1185">Reference proteome</keyword>
<keyword id="KW-0732">Signal</keyword>
<keyword id="KW-0812">Transmembrane</keyword>
<keyword id="KW-1133">Transmembrane helix</keyword>
<keyword id="KW-0832">Ubl conjugation</keyword>
<organism>
    <name type="scientific">Macaca mulatta</name>
    <name type="common">Rhesus macaque</name>
    <dbReference type="NCBI Taxonomy" id="9544"/>
    <lineage>
        <taxon>Eukaryota</taxon>
        <taxon>Metazoa</taxon>
        <taxon>Chordata</taxon>
        <taxon>Craniata</taxon>
        <taxon>Vertebrata</taxon>
        <taxon>Euteleostomi</taxon>
        <taxon>Mammalia</taxon>
        <taxon>Eutheria</taxon>
        <taxon>Euarchontoglires</taxon>
        <taxon>Primates</taxon>
        <taxon>Haplorrhini</taxon>
        <taxon>Catarrhini</taxon>
        <taxon>Cercopithecidae</taxon>
        <taxon>Cercopithecinae</taxon>
        <taxon>Macaca</taxon>
    </lineage>
</organism>